<dbReference type="EC" id="2.1.2.3" evidence="1"/>
<dbReference type="EC" id="3.5.4.10" evidence="1"/>
<dbReference type="EMBL" id="CU207211">
    <property type="protein sequence ID" value="CAL60483.1"/>
    <property type="molecule type" value="Genomic_DNA"/>
</dbReference>
<dbReference type="SMR" id="A4G1U6"/>
<dbReference type="STRING" id="204773.HEAR0255"/>
<dbReference type="KEGG" id="har:HEAR0255"/>
<dbReference type="eggNOG" id="COG0138">
    <property type="taxonomic scope" value="Bacteria"/>
</dbReference>
<dbReference type="HOGENOM" id="CLU_016316_5_2_4"/>
<dbReference type="OrthoDB" id="9802065at2"/>
<dbReference type="UniPathway" id="UPA00074">
    <property type="reaction ID" value="UER00133"/>
</dbReference>
<dbReference type="UniPathway" id="UPA00074">
    <property type="reaction ID" value="UER00135"/>
</dbReference>
<dbReference type="Proteomes" id="UP000006697">
    <property type="component" value="Chromosome"/>
</dbReference>
<dbReference type="GO" id="GO:0005829">
    <property type="term" value="C:cytosol"/>
    <property type="evidence" value="ECO:0007669"/>
    <property type="project" value="TreeGrafter"/>
</dbReference>
<dbReference type="GO" id="GO:0003937">
    <property type="term" value="F:IMP cyclohydrolase activity"/>
    <property type="evidence" value="ECO:0007669"/>
    <property type="project" value="UniProtKB-UniRule"/>
</dbReference>
<dbReference type="GO" id="GO:0004643">
    <property type="term" value="F:phosphoribosylaminoimidazolecarboxamide formyltransferase activity"/>
    <property type="evidence" value="ECO:0007669"/>
    <property type="project" value="UniProtKB-UniRule"/>
</dbReference>
<dbReference type="GO" id="GO:0006189">
    <property type="term" value="P:'de novo' IMP biosynthetic process"/>
    <property type="evidence" value="ECO:0007669"/>
    <property type="project" value="UniProtKB-UniRule"/>
</dbReference>
<dbReference type="CDD" id="cd01421">
    <property type="entry name" value="IMPCH"/>
    <property type="match status" value="1"/>
</dbReference>
<dbReference type="FunFam" id="3.40.140.20:FF:000001">
    <property type="entry name" value="Bifunctional purine biosynthesis protein PurH"/>
    <property type="match status" value="1"/>
</dbReference>
<dbReference type="FunFam" id="3.40.140.20:FF:000002">
    <property type="entry name" value="Bifunctional purine biosynthesis protein PurH"/>
    <property type="match status" value="1"/>
</dbReference>
<dbReference type="FunFam" id="3.40.50.1380:FF:000001">
    <property type="entry name" value="Bifunctional purine biosynthesis protein PurH"/>
    <property type="match status" value="1"/>
</dbReference>
<dbReference type="Gene3D" id="3.40.140.20">
    <property type="match status" value="2"/>
</dbReference>
<dbReference type="Gene3D" id="3.40.50.1380">
    <property type="entry name" value="Methylglyoxal synthase-like domain"/>
    <property type="match status" value="1"/>
</dbReference>
<dbReference type="HAMAP" id="MF_00139">
    <property type="entry name" value="PurH"/>
    <property type="match status" value="1"/>
</dbReference>
<dbReference type="InterPro" id="IPR024051">
    <property type="entry name" value="AICAR_Tfase_dup_dom_sf"/>
</dbReference>
<dbReference type="InterPro" id="IPR016193">
    <property type="entry name" value="Cytidine_deaminase-like"/>
</dbReference>
<dbReference type="InterPro" id="IPR011607">
    <property type="entry name" value="MGS-like_dom"/>
</dbReference>
<dbReference type="InterPro" id="IPR036914">
    <property type="entry name" value="MGS-like_dom_sf"/>
</dbReference>
<dbReference type="InterPro" id="IPR002695">
    <property type="entry name" value="PurH-like"/>
</dbReference>
<dbReference type="NCBIfam" id="NF002049">
    <property type="entry name" value="PRK00881.1"/>
    <property type="match status" value="1"/>
</dbReference>
<dbReference type="NCBIfam" id="TIGR00355">
    <property type="entry name" value="purH"/>
    <property type="match status" value="1"/>
</dbReference>
<dbReference type="PANTHER" id="PTHR11692:SF0">
    <property type="entry name" value="BIFUNCTIONAL PURINE BIOSYNTHESIS PROTEIN ATIC"/>
    <property type="match status" value="1"/>
</dbReference>
<dbReference type="PANTHER" id="PTHR11692">
    <property type="entry name" value="BIFUNCTIONAL PURINE BIOSYNTHESIS PROTEIN PURH"/>
    <property type="match status" value="1"/>
</dbReference>
<dbReference type="Pfam" id="PF01808">
    <property type="entry name" value="AICARFT_IMPCHas"/>
    <property type="match status" value="1"/>
</dbReference>
<dbReference type="Pfam" id="PF02142">
    <property type="entry name" value="MGS"/>
    <property type="match status" value="1"/>
</dbReference>
<dbReference type="PIRSF" id="PIRSF000414">
    <property type="entry name" value="AICARFT_IMPCHas"/>
    <property type="match status" value="1"/>
</dbReference>
<dbReference type="SMART" id="SM00798">
    <property type="entry name" value="AICARFT_IMPCHas"/>
    <property type="match status" value="1"/>
</dbReference>
<dbReference type="SMART" id="SM00851">
    <property type="entry name" value="MGS"/>
    <property type="match status" value="1"/>
</dbReference>
<dbReference type="SUPFAM" id="SSF53927">
    <property type="entry name" value="Cytidine deaminase-like"/>
    <property type="match status" value="1"/>
</dbReference>
<dbReference type="SUPFAM" id="SSF52335">
    <property type="entry name" value="Methylglyoxal synthase-like"/>
    <property type="match status" value="1"/>
</dbReference>
<dbReference type="PROSITE" id="PS51855">
    <property type="entry name" value="MGS"/>
    <property type="match status" value="1"/>
</dbReference>
<protein>
    <recommendedName>
        <fullName evidence="1">Bifunctional purine biosynthesis protein PurH</fullName>
    </recommendedName>
    <domain>
        <recommendedName>
            <fullName evidence="1">Phosphoribosylaminoimidazolecarboxamide formyltransferase</fullName>
            <ecNumber evidence="1">2.1.2.3</ecNumber>
        </recommendedName>
        <alternativeName>
            <fullName evidence="1">AICAR transformylase</fullName>
        </alternativeName>
    </domain>
    <domain>
        <recommendedName>
            <fullName evidence="1">IMP cyclohydrolase</fullName>
            <ecNumber evidence="1">3.5.4.10</ecNumber>
        </recommendedName>
        <alternativeName>
            <fullName evidence="1">ATIC</fullName>
        </alternativeName>
        <alternativeName>
            <fullName evidence="1">IMP synthase</fullName>
        </alternativeName>
        <alternativeName>
            <fullName evidence="1">Inosinicase</fullName>
        </alternativeName>
    </domain>
</protein>
<name>PUR9_HERAR</name>
<sequence length="521" mass="56035">MIKQALISVSDKTGVLDFARALSAMGVNILSTGGTAKLLAENGISVTEVADYTGFPEMLDGRVKTLHPKVHGGILARRDFPEHVAALSKHDIPTIDMVVVNLYPFQQTVARAECSLEDAIENIDIGGPAMLRSSAKNHKDVIVICDPSDYSLVLHELNTNNGEATYETKFALAKKVFAHTAQYDGAITNYFTSLGADKQHATRSSYPATLNLHFEKVQEMRYGENPHQSAAFYRESNPQAGALANYAQLQGKELSYNNIADADAAWECVKTFDEAACVIIKHANPCGVAVGITPFEAYSKALQTDPTSAFGGIIAFNREVDGNAAEAVAKQFVEVLIAPSFTEQAKKIFAAKQNVRLLEIPLGDAVNSHDFKRVGGGLLVQSPDAKNVTLAELKVVSKKQPTPQQLQDLMFAWRVAKFVKSNAIVFCANGMTMGVGAGQMSRIDSARIAAIKAQNAGLSLVGTAVASDAFFPFRDGLDVVVEAGATSVIHPGGSMRDQEVIDAADEHGIVMLLTGTRHFRH</sequence>
<gene>
    <name evidence="1" type="primary">purH</name>
    <name type="ordered locus">HEAR0255</name>
</gene>
<reference key="1">
    <citation type="journal article" date="2007" name="PLoS Genet.">
        <title>A tale of two oxidation states: bacterial colonization of arsenic-rich environments.</title>
        <authorList>
            <person name="Muller D."/>
            <person name="Medigue C."/>
            <person name="Koechler S."/>
            <person name="Barbe V."/>
            <person name="Barakat M."/>
            <person name="Talla E."/>
            <person name="Bonnefoy V."/>
            <person name="Krin E."/>
            <person name="Arsene-Ploetze F."/>
            <person name="Carapito C."/>
            <person name="Chandler M."/>
            <person name="Cournoyer B."/>
            <person name="Cruveiller S."/>
            <person name="Dossat C."/>
            <person name="Duval S."/>
            <person name="Heymann M."/>
            <person name="Leize E."/>
            <person name="Lieutaud A."/>
            <person name="Lievremont D."/>
            <person name="Makita Y."/>
            <person name="Mangenot S."/>
            <person name="Nitschke W."/>
            <person name="Ortet P."/>
            <person name="Perdrial N."/>
            <person name="Schoepp B."/>
            <person name="Siguier P."/>
            <person name="Simeonova D.D."/>
            <person name="Rouy Z."/>
            <person name="Segurens B."/>
            <person name="Turlin E."/>
            <person name="Vallenet D."/>
            <person name="van Dorsselaer A."/>
            <person name="Weiss S."/>
            <person name="Weissenbach J."/>
            <person name="Lett M.-C."/>
            <person name="Danchin A."/>
            <person name="Bertin P.N."/>
        </authorList>
    </citation>
    <scope>NUCLEOTIDE SEQUENCE [LARGE SCALE GENOMIC DNA]</scope>
    <source>
        <strain>ULPAs1</strain>
    </source>
</reference>
<organism>
    <name type="scientific">Herminiimonas arsenicoxydans</name>
    <dbReference type="NCBI Taxonomy" id="204773"/>
    <lineage>
        <taxon>Bacteria</taxon>
        <taxon>Pseudomonadati</taxon>
        <taxon>Pseudomonadota</taxon>
        <taxon>Betaproteobacteria</taxon>
        <taxon>Burkholderiales</taxon>
        <taxon>Oxalobacteraceae</taxon>
        <taxon>Herminiimonas</taxon>
    </lineage>
</organism>
<keyword id="KW-0378">Hydrolase</keyword>
<keyword id="KW-0511">Multifunctional enzyme</keyword>
<keyword id="KW-0658">Purine biosynthesis</keyword>
<keyword id="KW-1185">Reference proteome</keyword>
<keyword id="KW-0808">Transferase</keyword>
<evidence type="ECO:0000255" key="1">
    <source>
        <dbReference type="HAMAP-Rule" id="MF_00139"/>
    </source>
</evidence>
<evidence type="ECO:0000255" key="2">
    <source>
        <dbReference type="PROSITE-ProRule" id="PRU01202"/>
    </source>
</evidence>
<comment type="catalytic activity">
    <reaction evidence="1">
        <text>(6R)-10-formyltetrahydrofolate + 5-amino-1-(5-phospho-beta-D-ribosyl)imidazole-4-carboxamide = 5-formamido-1-(5-phospho-D-ribosyl)imidazole-4-carboxamide + (6S)-5,6,7,8-tetrahydrofolate</text>
        <dbReference type="Rhea" id="RHEA:22192"/>
        <dbReference type="ChEBI" id="CHEBI:57453"/>
        <dbReference type="ChEBI" id="CHEBI:58467"/>
        <dbReference type="ChEBI" id="CHEBI:58475"/>
        <dbReference type="ChEBI" id="CHEBI:195366"/>
        <dbReference type="EC" id="2.1.2.3"/>
    </reaction>
</comment>
<comment type="catalytic activity">
    <reaction evidence="1">
        <text>IMP + H2O = 5-formamido-1-(5-phospho-D-ribosyl)imidazole-4-carboxamide</text>
        <dbReference type="Rhea" id="RHEA:18445"/>
        <dbReference type="ChEBI" id="CHEBI:15377"/>
        <dbReference type="ChEBI" id="CHEBI:58053"/>
        <dbReference type="ChEBI" id="CHEBI:58467"/>
        <dbReference type="EC" id="3.5.4.10"/>
    </reaction>
</comment>
<comment type="pathway">
    <text evidence="1">Purine metabolism; IMP biosynthesis via de novo pathway; 5-formamido-1-(5-phospho-D-ribosyl)imidazole-4-carboxamide from 5-amino-1-(5-phospho-D-ribosyl)imidazole-4-carboxamide (10-formyl THF route): step 1/1.</text>
</comment>
<comment type="pathway">
    <text evidence="1">Purine metabolism; IMP biosynthesis via de novo pathway; IMP from 5-formamido-1-(5-phospho-D-ribosyl)imidazole-4-carboxamide: step 1/1.</text>
</comment>
<comment type="domain">
    <text evidence="1">The IMP cyclohydrolase activity resides in the N-terminal region.</text>
</comment>
<comment type="similarity">
    <text evidence="1">Belongs to the PurH family.</text>
</comment>
<accession>A4G1U6</accession>
<feature type="chain" id="PRO_1000018893" description="Bifunctional purine biosynthesis protein PurH">
    <location>
        <begin position="1"/>
        <end position="521"/>
    </location>
</feature>
<feature type="domain" description="MGS-like" evidence="2">
    <location>
        <begin position="1"/>
        <end position="145"/>
    </location>
</feature>
<proteinExistence type="inferred from homology"/>